<dbReference type="EMBL" id="AP006878">
    <property type="protein sequence ID" value="BAD84804.1"/>
    <property type="molecule type" value="Genomic_DNA"/>
</dbReference>
<dbReference type="RefSeq" id="WP_011249566.1">
    <property type="nucleotide sequence ID" value="NC_006624.1"/>
</dbReference>
<dbReference type="PDB" id="6SKF">
    <property type="method" value="EM"/>
    <property type="resolution" value="2.95 A"/>
    <property type="chains" value="Bg=1-86"/>
</dbReference>
<dbReference type="PDB" id="6SKG">
    <property type="method" value="EM"/>
    <property type="resolution" value="2.65 A"/>
    <property type="chains" value="Bg=1-86"/>
</dbReference>
<dbReference type="PDB" id="6TH6">
    <property type="method" value="EM"/>
    <property type="resolution" value="2.55 A"/>
    <property type="chains" value="Bg=1-86"/>
</dbReference>
<dbReference type="PDBsum" id="6SKF"/>
<dbReference type="PDBsum" id="6SKG"/>
<dbReference type="PDBsum" id="6TH6"/>
<dbReference type="EMDB" id="EMD-10223"/>
<dbReference type="EMDB" id="EMD-10224"/>
<dbReference type="EMDB" id="EMD-10503"/>
<dbReference type="SMR" id="Q5JDM6"/>
<dbReference type="FunCoup" id="Q5JDM6">
    <property type="interactions" value="125"/>
</dbReference>
<dbReference type="STRING" id="69014.TK0615"/>
<dbReference type="EnsemblBacteria" id="BAD84804">
    <property type="protein sequence ID" value="BAD84804"/>
    <property type="gene ID" value="TK0615"/>
</dbReference>
<dbReference type="GeneID" id="78447130"/>
<dbReference type="KEGG" id="tko:TK0615"/>
<dbReference type="PATRIC" id="fig|69014.16.peg.596"/>
<dbReference type="eggNOG" id="arCOG04208">
    <property type="taxonomic scope" value="Archaea"/>
</dbReference>
<dbReference type="HOGENOM" id="CLU_141199_2_0_2"/>
<dbReference type="InParanoid" id="Q5JDM6"/>
<dbReference type="OrthoDB" id="372011at2157"/>
<dbReference type="PhylomeDB" id="Q5JDM6"/>
<dbReference type="Proteomes" id="UP000000536">
    <property type="component" value="Chromosome"/>
</dbReference>
<dbReference type="GO" id="GO:1990904">
    <property type="term" value="C:ribonucleoprotein complex"/>
    <property type="evidence" value="ECO:0007669"/>
    <property type="project" value="UniProtKB-KW"/>
</dbReference>
<dbReference type="GO" id="GO:0005840">
    <property type="term" value="C:ribosome"/>
    <property type="evidence" value="ECO:0007669"/>
    <property type="project" value="UniProtKB-KW"/>
</dbReference>
<dbReference type="GO" id="GO:0070180">
    <property type="term" value="F:large ribosomal subunit rRNA binding"/>
    <property type="evidence" value="ECO:0007669"/>
    <property type="project" value="UniProtKB-UniRule"/>
</dbReference>
<dbReference type="GO" id="GO:0003735">
    <property type="term" value="F:structural constituent of ribosome"/>
    <property type="evidence" value="ECO:0007669"/>
    <property type="project" value="InterPro"/>
</dbReference>
<dbReference type="GO" id="GO:0008270">
    <property type="term" value="F:zinc ion binding"/>
    <property type="evidence" value="ECO:0007669"/>
    <property type="project" value="UniProtKB-UniRule"/>
</dbReference>
<dbReference type="GO" id="GO:0006412">
    <property type="term" value="P:translation"/>
    <property type="evidence" value="ECO:0007669"/>
    <property type="project" value="UniProtKB-UniRule"/>
</dbReference>
<dbReference type="Gene3D" id="2.20.25.30">
    <property type="match status" value="1"/>
</dbReference>
<dbReference type="HAMAP" id="MF_00327">
    <property type="entry name" value="Ribosomal_eL43"/>
    <property type="match status" value="1"/>
</dbReference>
<dbReference type="InterPro" id="IPR011331">
    <property type="entry name" value="Ribosomal_eL37/eL43"/>
</dbReference>
<dbReference type="InterPro" id="IPR002674">
    <property type="entry name" value="Ribosomal_eL43"/>
</dbReference>
<dbReference type="InterPro" id="IPR050522">
    <property type="entry name" value="Ribosomal_protein_eL43"/>
</dbReference>
<dbReference type="InterPro" id="IPR011332">
    <property type="entry name" value="Ribosomal_zn-bd"/>
</dbReference>
<dbReference type="NCBIfam" id="TIGR00280">
    <property type="entry name" value="eL43_euk_arch"/>
    <property type="match status" value="1"/>
</dbReference>
<dbReference type="NCBIfam" id="NF003058">
    <property type="entry name" value="PRK03976.1"/>
    <property type="match status" value="1"/>
</dbReference>
<dbReference type="PANTHER" id="PTHR48129">
    <property type="entry name" value="60S RIBOSOMAL PROTEIN L37A"/>
    <property type="match status" value="1"/>
</dbReference>
<dbReference type="PANTHER" id="PTHR48129:SF1">
    <property type="entry name" value="LARGE RIBOSOMAL SUBUNIT PROTEIN EL43"/>
    <property type="match status" value="1"/>
</dbReference>
<dbReference type="Pfam" id="PF01780">
    <property type="entry name" value="Ribosomal_L37ae"/>
    <property type="match status" value="1"/>
</dbReference>
<dbReference type="SUPFAM" id="SSF57829">
    <property type="entry name" value="Zn-binding ribosomal proteins"/>
    <property type="match status" value="1"/>
</dbReference>
<reference key="1">
    <citation type="journal article" date="2005" name="Genome Res.">
        <title>Complete genome sequence of the hyperthermophilic archaeon Thermococcus kodakaraensis KOD1 and comparison with Pyrococcus genomes.</title>
        <authorList>
            <person name="Fukui T."/>
            <person name="Atomi H."/>
            <person name="Kanai T."/>
            <person name="Matsumi R."/>
            <person name="Fujiwara S."/>
            <person name="Imanaka T."/>
        </authorList>
    </citation>
    <scope>NUCLEOTIDE SEQUENCE [LARGE SCALE GENOMIC DNA]</scope>
    <source>
        <strain>ATCC BAA-918 / JCM 12380 / KOD1</strain>
    </source>
</reference>
<reference evidence="4 5 6" key="2">
    <citation type="journal article" date="2020" name="Nature">
        <title>Dynamic RNA acetylation revealed by quantitative cross-evolutionary mapping.</title>
        <authorList>
            <person name="Sas-Chen A."/>
            <person name="Thomas J.M."/>
            <person name="Matzov D."/>
            <person name="Taoka M."/>
            <person name="Nance K.D."/>
            <person name="Nir R."/>
            <person name="Bryson K.M."/>
            <person name="Shachar R."/>
            <person name="Liman G.L.S."/>
            <person name="Burkhart B.W."/>
            <person name="Gamage S.T."/>
            <person name="Nobe Y."/>
            <person name="Briney C.A."/>
            <person name="Levy M.J."/>
            <person name="Fuchs R.T."/>
            <person name="Robb G.B."/>
            <person name="Hartmann J."/>
            <person name="Sharma S."/>
            <person name="Lin Q."/>
            <person name="Florens L."/>
            <person name="Washburn M.P."/>
            <person name="Isobe T."/>
            <person name="Santangelo T.J."/>
            <person name="Shalev-Benami M."/>
            <person name="Meier J.L."/>
            <person name="Schwartz S."/>
        </authorList>
    </citation>
    <scope>STRUCTURE BY ELECTRON MICROSCOPY (2.55 ANGSTROMS) IN 70S RIBOSOME IN COMPLEX WITH ZN(2+)</scope>
    <scope>SUBUNIT</scope>
    <source>
        <strain>ATCC BAA-918 / TS559</strain>
    </source>
</reference>
<gene>
    <name evidence="1" type="primary">rpl37ae</name>
    <name type="ordered locus">TK0615</name>
</gene>
<evidence type="ECO:0000255" key="1">
    <source>
        <dbReference type="HAMAP-Rule" id="MF_00327"/>
    </source>
</evidence>
<evidence type="ECO:0000269" key="2">
    <source>
    </source>
</evidence>
<evidence type="ECO:0000305" key="3"/>
<evidence type="ECO:0007744" key="4">
    <source>
        <dbReference type="PDB" id="6SKF"/>
    </source>
</evidence>
<evidence type="ECO:0007744" key="5">
    <source>
        <dbReference type="PDB" id="6SKG"/>
    </source>
</evidence>
<evidence type="ECO:0007744" key="6">
    <source>
        <dbReference type="PDB" id="6TH6"/>
    </source>
</evidence>
<protein>
    <recommendedName>
        <fullName evidence="1">Large ribosomal subunit protein eL43</fullName>
    </recommendedName>
    <alternativeName>
        <fullName evidence="3">50S ribosomal protein L37Ae</fullName>
    </alternativeName>
    <alternativeName>
        <fullName evidence="1">Ribosomal protein L43e</fullName>
    </alternativeName>
</protein>
<name>RL37A_THEKO</name>
<feature type="chain" id="PRO_0000139853" description="Large ribosomal subunit protein eL43">
    <location>
        <begin position="1"/>
        <end position="86"/>
    </location>
</feature>
<feature type="zinc finger region" description="C4-type" evidence="1 2">
    <location>
        <begin position="38"/>
        <end position="59"/>
    </location>
</feature>
<feature type="binding site" evidence="4 5 6">
    <location>
        <position position="38"/>
    </location>
    <ligand>
        <name>Zn(2+)</name>
        <dbReference type="ChEBI" id="CHEBI:29105"/>
    </ligand>
</feature>
<feature type="binding site" evidence="4 5 6">
    <location>
        <position position="41"/>
    </location>
    <ligand>
        <name>Zn(2+)</name>
        <dbReference type="ChEBI" id="CHEBI:29105"/>
    </ligand>
</feature>
<feature type="binding site" evidence="4 5 6">
    <location>
        <position position="56"/>
    </location>
    <ligand>
        <name>Zn(2+)</name>
        <dbReference type="ChEBI" id="CHEBI:29105"/>
    </ligand>
</feature>
<feature type="binding site" evidence="4 5 6">
    <location>
        <position position="59"/>
    </location>
    <ligand>
        <name>Zn(2+)</name>
        <dbReference type="ChEBI" id="CHEBI:29105"/>
    </ligand>
</feature>
<accession>Q5JDM6</accession>
<keyword id="KW-0002">3D-structure</keyword>
<keyword id="KW-0479">Metal-binding</keyword>
<keyword id="KW-1185">Reference proteome</keyword>
<keyword id="KW-0687">Ribonucleoprotein</keyword>
<keyword id="KW-0689">Ribosomal protein</keyword>
<keyword id="KW-0694">RNA-binding</keyword>
<keyword id="KW-0862">Zinc</keyword>
<keyword id="KW-0863">Zinc-finger</keyword>
<organism>
    <name type="scientific">Thermococcus kodakarensis (strain ATCC BAA-918 / JCM 12380 / KOD1)</name>
    <name type="common">Pyrococcus kodakaraensis (strain KOD1)</name>
    <dbReference type="NCBI Taxonomy" id="69014"/>
    <lineage>
        <taxon>Archaea</taxon>
        <taxon>Methanobacteriati</taxon>
        <taxon>Methanobacteriota</taxon>
        <taxon>Thermococci</taxon>
        <taxon>Thermococcales</taxon>
        <taxon>Thermococcaceae</taxon>
        <taxon>Thermococcus</taxon>
    </lineage>
</organism>
<sequence>MGRTTKVGSAGRFGPRYGLKIRRRVAAVEARMKQKHVCPVCGRKAVRRISTGIWQCQKCGATFAGGAYLPTTPAGKVAKRVTASKA</sequence>
<comment type="cofactor">
    <cofactor evidence="1 4 5 6">
        <name>Zn(2+)</name>
        <dbReference type="ChEBI" id="CHEBI:29105"/>
    </cofactor>
    <text evidence="1 4 5 6">Binds 1 zinc ion per subunit.</text>
</comment>
<comment type="subunit">
    <text evidence="2">Part of the 50S ribosomal subunit.</text>
</comment>
<comment type="similarity">
    <text evidence="1">Belongs to the eukaryotic ribosomal protein eL43 family.</text>
</comment>
<proteinExistence type="evidence at protein level"/>